<proteinExistence type="inferred from homology"/>
<name>BPT_PSESM</name>
<feature type="chain" id="PRO_0000195110" description="Aspartate/glutamate leucyltransferase">
    <location>
        <begin position="1"/>
        <end position="235"/>
    </location>
</feature>
<keyword id="KW-0012">Acyltransferase</keyword>
<keyword id="KW-0963">Cytoplasm</keyword>
<keyword id="KW-1185">Reference proteome</keyword>
<keyword id="KW-0808">Transferase</keyword>
<protein>
    <recommendedName>
        <fullName evidence="1">Aspartate/glutamate leucyltransferase</fullName>
        <ecNumber evidence="1">2.3.2.29</ecNumber>
    </recommendedName>
</protein>
<accession>Q87ZS3</accession>
<reference key="1">
    <citation type="journal article" date="2003" name="Proc. Natl. Acad. Sci. U.S.A.">
        <title>The complete genome sequence of the Arabidopsis and tomato pathogen Pseudomonas syringae pv. tomato DC3000.</title>
        <authorList>
            <person name="Buell C.R."/>
            <person name="Joardar V."/>
            <person name="Lindeberg M."/>
            <person name="Selengut J."/>
            <person name="Paulsen I.T."/>
            <person name="Gwinn M.L."/>
            <person name="Dodson R.J."/>
            <person name="DeBoy R.T."/>
            <person name="Durkin A.S."/>
            <person name="Kolonay J.F."/>
            <person name="Madupu R."/>
            <person name="Daugherty S.C."/>
            <person name="Brinkac L.M."/>
            <person name="Beanan M.J."/>
            <person name="Haft D.H."/>
            <person name="Nelson W.C."/>
            <person name="Davidsen T.M."/>
            <person name="Zafar N."/>
            <person name="Zhou L."/>
            <person name="Liu J."/>
            <person name="Yuan Q."/>
            <person name="Khouri H.M."/>
            <person name="Fedorova N.B."/>
            <person name="Tran B."/>
            <person name="Russell D."/>
            <person name="Berry K.J."/>
            <person name="Utterback T.R."/>
            <person name="Van Aken S.E."/>
            <person name="Feldblyum T.V."/>
            <person name="D'Ascenzo M."/>
            <person name="Deng W.-L."/>
            <person name="Ramos A.R."/>
            <person name="Alfano J.R."/>
            <person name="Cartinhour S."/>
            <person name="Chatterjee A.K."/>
            <person name="Delaney T.P."/>
            <person name="Lazarowitz S.G."/>
            <person name="Martin G.B."/>
            <person name="Schneider D.J."/>
            <person name="Tang X."/>
            <person name="Bender C.L."/>
            <person name="White O."/>
            <person name="Fraser C.M."/>
            <person name="Collmer A."/>
        </authorList>
    </citation>
    <scope>NUCLEOTIDE SEQUENCE [LARGE SCALE GENOMIC DNA]</scope>
    <source>
        <strain>ATCC BAA-871 / DC3000</strain>
    </source>
</reference>
<sequence length="235" mass="27796">MTELARLKFYATQPHTCSYLPEEQATTLFLDPSQPMDVQVYADLSDMGFRRSGDHLYRPHCQNCSACVPARIPVNLFVPDRQQKRILKRNADIQVSSAKPVFTQEYFDLYQRYIEQRHADGDMFPPSREQFSTFLVRDLPFSRFYEFRVDQRLLAVAVTDLLPNGLSAVYTFYEPDEERRSLGRYAILWQIGEATRLQLQAVYLGYWIKNCKKMNYKTQYRPIELLTNQRWVTLY</sequence>
<organism>
    <name type="scientific">Pseudomonas syringae pv. tomato (strain ATCC BAA-871 / DC3000)</name>
    <dbReference type="NCBI Taxonomy" id="223283"/>
    <lineage>
        <taxon>Bacteria</taxon>
        <taxon>Pseudomonadati</taxon>
        <taxon>Pseudomonadota</taxon>
        <taxon>Gammaproteobacteria</taxon>
        <taxon>Pseudomonadales</taxon>
        <taxon>Pseudomonadaceae</taxon>
        <taxon>Pseudomonas</taxon>
    </lineage>
</organism>
<gene>
    <name evidence="1" type="primary">bpt</name>
    <name type="ordered locus">PSPTO_3351</name>
</gene>
<dbReference type="EC" id="2.3.2.29" evidence="1"/>
<dbReference type="EMBL" id="AE016853">
    <property type="protein sequence ID" value="AAO56829.1"/>
    <property type="molecule type" value="Genomic_DNA"/>
</dbReference>
<dbReference type="RefSeq" id="NP_793134.1">
    <property type="nucleotide sequence ID" value="NC_004578.1"/>
</dbReference>
<dbReference type="RefSeq" id="WP_005767401.1">
    <property type="nucleotide sequence ID" value="NC_004578.1"/>
</dbReference>
<dbReference type="SMR" id="Q87ZS3"/>
<dbReference type="STRING" id="223283.PSPTO_3351"/>
<dbReference type="DNASU" id="1185010"/>
<dbReference type="KEGG" id="pst:PSPTO_3351"/>
<dbReference type="PATRIC" id="fig|223283.9.peg.3430"/>
<dbReference type="eggNOG" id="COG2935">
    <property type="taxonomic scope" value="Bacteria"/>
</dbReference>
<dbReference type="HOGENOM" id="CLU_077607_0_0_6"/>
<dbReference type="OrthoDB" id="9782022at2"/>
<dbReference type="PhylomeDB" id="Q87ZS3"/>
<dbReference type="Proteomes" id="UP000002515">
    <property type="component" value="Chromosome"/>
</dbReference>
<dbReference type="GO" id="GO:0005737">
    <property type="term" value="C:cytoplasm"/>
    <property type="evidence" value="ECO:0007669"/>
    <property type="project" value="UniProtKB-SubCell"/>
</dbReference>
<dbReference type="GO" id="GO:0004057">
    <property type="term" value="F:arginyl-tRNA--protein transferase activity"/>
    <property type="evidence" value="ECO:0007669"/>
    <property type="project" value="InterPro"/>
</dbReference>
<dbReference type="GO" id="GO:0008914">
    <property type="term" value="F:leucyl-tRNA--protein transferase activity"/>
    <property type="evidence" value="ECO:0007669"/>
    <property type="project" value="UniProtKB-UniRule"/>
</dbReference>
<dbReference type="GO" id="GO:0071596">
    <property type="term" value="P:ubiquitin-dependent protein catabolic process via the N-end rule pathway"/>
    <property type="evidence" value="ECO:0007669"/>
    <property type="project" value="InterPro"/>
</dbReference>
<dbReference type="HAMAP" id="MF_00689">
    <property type="entry name" value="Bpt"/>
    <property type="match status" value="1"/>
</dbReference>
<dbReference type="InterPro" id="IPR016181">
    <property type="entry name" value="Acyl_CoA_acyltransferase"/>
</dbReference>
<dbReference type="InterPro" id="IPR017138">
    <property type="entry name" value="Asp_Glu_LeuTrfase"/>
</dbReference>
<dbReference type="InterPro" id="IPR030700">
    <property type="entry name" value="N-end_Aminoacyl_Trfase"/>
</dbReference>
<dbReference type="InterPro" id="IPR007472">
    <property type="entry name" value="N-end_Aminoacyl_Trfase_C"/>
</dbReference>
<dbReference type="InterPro" id="IPR007471">
    <property type="entry name" value="N-end_Aminoacyl_Trfase_N"/>
</dbReference>
<dbReference type="NCBIfam" id="NF002341">
    <property type="entry name" value="PRK01305.1-1"/>
    <property type="match status" value="1"/>
</dbReference>
<dbReference type="NCBIfam" id="NF002342">
    <property type="entry name" value="PRK01305.1-3"/>
    <property type="match status" value="1"/>
</dbReference>
<dbReference type="NCBIfam" id="NF002345">
    <property type="entry name" value="PRK01305.2-2"/>
    <property type="match status" value="1"/>
</dbReference>
<dbReference type="NCBIfam" id="NF002346">
    <property type="entry name" value="PRK01305.2-3"/>
    <property type="match status" value="1"/>
</dbReference>
<dbReference type="PANTHER" id="PTHR21367">
    <property type="entry name" value="ARGININE-TRNA-PROTEIN TRANSFERASE 1"/>
    <property type="match status" value="1"/>
</dbReference>
<dbReference type="PANTHER" id="PTHR21367:SF1">
    <property type="entry name" value="ARGINYL-TRNA--PROTEIN TRANSFERASE 1"/>
    <property type="match status" value="1"/>
</dbReference>
<dbReference type="Pfam" id="PF04377">
    <property type="entry name" value="ATE_C"/>
    <property type="match status" value="1"/>
</dbReference>
<dbReference type="Pfam" id="PF04376">
    <property type="entry name" value="ATE_N"/>
    <property type="match status" value="1"/>
</dbReference>
<dbReference type="PIRSF" id="PIRSF037208">
    <property type="entry name" value="ATE_pro_prd"/>
    <property type="match status" value="1"/>
</dbReference>
<dbReference type="SUPFAM" id="SSF55729">
    <property type="entry name" value="Acyl-CoA N-acyltransferases (Nat)"/>
    <property type="match status" value="1"/>
</dbReference>
<comment type="function">
    <text evidence="1">Functions in the N-end rule pathway of protein degradation where it conjugates Leu from its aminoacyl-tRNA to the N-termini of proteins containing an N-terminal aspartate or glutamate.</text>
</comment>
<comment type="catalytic activity">
    <reaction evidence="1">
        <text>N-terminal L-glutamyl-[protein] + L-leucyl-tRNA(Leu) = N-terminal L-leucyl-L-glutamyl-[protein] + tRNA(Leu) + H(+)</text>
        <dbReference type="Rhea" id="RHEA:50412"/>
        <dbReference type="Rhea" id="RHEA-COMP:9613"/>
        <dbReference type="Rhea" id="RHEA-COMP:9622"/>
        <dbReference type="Rhea" id="RHEA-COMP:12664"/>
        <dbReference type="Rhea" id="RHEA-COMP:12668"/>
        <dbReference type="ChEBI" id="CHEBI:15378"/>
        <dbReference type="ChEBI" id="CHEBI:64721"/>
        <dbReference type="ChEBI" id="CHEBI:78442"/>
        <dbReference type="ChEBI" id="CHEBI:78494"/>
        <dbReference type="ChEBI" id="CHEBI:133041"/>
        <dbReference type="EC" id="2.3.2.29"/>
    </reaction>
</comment>
<comment type="catalytic activity">
    <reaction evidence="1">
        <text>N-terminal L-aspartyl-[protein] + L-leucyl-tRNA(Leu) = N-terminal L-leucyl-L-aspartyl-[protein] + tRNA(Leu) + H(+)</text>
        <dbReference type="Rhea" id="RHEA:50420"/>
        <dbReference type="Rhea" id="RHEA-COMP:9613"/>
        <dbReference type="Rhea" id="RHEA-COMP:9622"/>
        <dbReference type="Rhea" id="RHEA-COMP:12669"/>
        <dbReference type="Rhea" id="RHEA-COMP:12674"/>
        <dbReference type="ChEBI" id="CHEBI:15378"/>
        <dbReference type="ChEBI" id="CHEBI:64720"/>
        <dbReference type="ChEBI" id="CHEBI:78442"/>
        <dbReference type="ChEBI" id="CHEBI:78494"/>
        <dbReference type="ChEBI" id="CHEBI:133042"/>
        <dbReference type="EC" id="2.3.2.29"/>
    </reaction>
</comment>
<comment type="subcellular location">
    <subcellularLocation>
        <location evidence="1">Cytoplasm</location>
    </subcellularLocation>
</comment>
<comment type="similarity">
    <text evidence="1">Belongs to the R-transferase family. Bpt subfamily.</text>
</comment>
<evidence type="ECO:0000255" key="1">
    <source>
        <dbReference type="HAMAP-Rule" id="MF_00689"/>
    </source>
</evidence>